<reference key="1">
    <citation type="submission" date="2006-01" db="EMBL/GenBank/DDBJ databases">
        <title>Comparisons of endosperm proteins of domestic corn genotypes resistant or susceptible to Aspergillus flavus infection/aflatoxin production using proteomics.</title>
        <authorList>
            <person name="Chen Z.-Y."/>
            <person name="Brown R.L."/>
            <person name="Damann K.E."/>
            <person name="Cleveland T.E."/>
        </authorList>
    </citation>
    <scope>NUCLEOTIDE SEQUENCE [MRNA]</scope>
    <source>
        <strain>cv. Ohio 43</strain>
        <tissue>Endosperm</tissue>
    </source>
</reference>
<proteinExistence type="evidence at transcript level"/>
<organism>
    <name type="scientific">Zea mays</name>
    <name type="common">Maize</name>
    <dbReference type="NCBI Taxonomy" id="4577"/>
    <lineage>
        <taxon>Eukaryota</taxon>
        <taxon>Viridiplantae</taxon>
        <taxon>Streptophyta</taxon>
        <taxon>Embryophyta</taxon>
        <taxon>Tracheophyta</taxon>
        <taxon>Spermatophyta</taxon>
        <taxon>Magnoliopsida</taxon>
        <taxon>Liliopsida</taxon>
        <taxon>Poales</taxon>
        <taxon>Poaceae</taxon>
        <taxon>PACMAD clade</taxon>
        <taxon>Panicoideae</taxon>
        <taxon>Andropogonodae</taxon>
        <taxon>Andropogoneae</taxon>
        <taxon>Tripsacinae</taxon>
        <taxon>Zea</taxon>
    </lineage>
</organism>
<feature type="chain" id="PRO_0000285101" description="1-Cys peroxiredoxin PER1">
    <location>
        <begin position="1"/>
        <end position="229"/>
    </location>
</feature>
<feature type="domain" description="Thioredoxin" evidence="5">
    <location>
        <begin position="4"/>
        <end position="173"/>
    </location>
</feature>
<feature type="short sequence motif" description="Bipartite nuclear localization signal" evidence="4">
    <location>
        <begin position="205"/>
        <end position="228"/>
    </location>
</feature>
<feature type="active site" description="Cysteine sulfenic acid (-SOH) intermediate" evidence="3">
    <location>
        <position position="46"/>
    </location>
</feature>
<sequence length="229" mass="24905">MPGLTIGDTVPNLELDSTHGKIRIHDYVGDGYAIIFSHPADFTPVCTTEMAAMAGYAKEFEKRGVKLLGISCDDVESHRQWTKDVEAYGGKQQQQQATTTKVTFPILADPARDAIRQLNMVDPDEKDAAGRSMPSRALHVVGPDKAVKLSFLYPATTGRNMDEVLRAVDSLLTAAKHGGKVATPANWKPGECAVIAPGVSDEEARKMFPQGFETADLPSKKGYLRFTKV</sequence>
<comment type="function">
    <text evidence="1 3">Thiol-specific peroxidase that catalyzes the reduction of hydrogen peroxide and organic hydroperoxides to water and alcohols, respectively (By similarity). Seems to contribute to the inhibition of germination during stress (By similarity).</text>
</comment>
<comment type="catalytic activity">
    <reaction evidence="3">
        <text>a hydroperoxide + [thioredoxin]-dithiol = an alcohol + [thioredoxin]-disulfide + H2O</text>
        <dbReference type="Rhea" id="RHEA:62620"/>
        <dbReference type="Rhea" id="RHEA-COMP:10698"/>
        <dbReference type="Rhea" id="RHEA-COMP:10700"/>
        <dbReference type="ChEBI" id="CHEBI:15377"/>
        <dbReference type="ChEBI" id="CHEBI:29950"/>
        <dbReference type="ChEBI" id="CHEBI:30879"/>
        <dbReference type="ChEBI" id="CHEBI:35924"/>
        <dbReference type="ChEBI" id="CHEBI:50058"/>
        <dbReference type="EC" id="1.11.1.24"/>
    </reaction>
</comment>
<comment type="subcellular location">
    <subcellularLocation>
        <location evidence="1">Nucleus</location>
    </subcellularLocation>
    <subcellularLocation>
        <location evidence="1">Cytoplasm</location>
    </subcellularLocation>
</comment>
<comment type="miscellaneous">
    <text evidence="2">The active site is a conserved redox-active cysteine residue, the peroxidatic cysteine (C(P)), which makes the nucleophilic attack on the peroxide substrate. The peroxide oxidizes the C(P)-SH to cysteine sulfenic acid (C(P)-SOH), which then reacts with another cysteine residue, the resolving cysteine (C(R)), to form a disulfide bridge. The disulfide is subsequently reduced by an appropriate electron donor to complete the catalytic cycle. In this 1-Cys peroxiredoxin, no C(R) is present and C(P) instead forms a disulfide with a cysteine from another protein or with a small thiol molecule.</text>
</comment>
<comment type="similarity">
    <text evidence="6">Belongs to the peroxiredoxin family. Prx6 subfamily.</text>
</comment>
<keyword id="KW-0049">Antioxidant</keyword>
<keyword id="KW-0963">Cytoplasm</keyword>
<keyword id="KW-0539">Nucleus</keyword>
<keyword id="KW-0560">Oxidoreductase</keyword>
<keyword id="KW-0575">Peroxidase</keyword>
<keyword id="KW-0676">Redox-active center</keyword>
<keyword id="KW-1185">Reference proteome</keyword>
<evidence type="ECO:0000250" key="1">
    <source>
        <dbReference type="UniProtKB" id="O04005"/>
    </source>
</evidence>
<evidence type="ECO:0000250" key="2">
    <source>
        <dbReference type="UniProtKB" id="O35244"/>
    </source>
</evidence>
<evidence type="ECO:0000250" key="3">
    <source>
        <dbReference type="UniProtKB" id="P30041"/>
    </source>
</evidence>
<evidence type="ECO:0000255" key="4"/>
<evidence type="ECO:0000255" key="5">
    <source>
        <dbReference type="PROSITE-ProRule" id="PRU00691"/>
    </source>
</evidence>
<evidence type="ECO:0000305" key="6"/>
<dbReference type="EC" id="1.11.1.24" evidence="3"/>
<dbReference type="EMBL" id="DQ378060">
    <property type="protein sequence ID" value="ABD24377.1"/>
    <property type="molecule type" value="mRNA"/>
</dbReference>
<dbReference type="RefSeq" id="NP_001105998.1">
    <property type="nucleotide sequence ID" value="NM_001112528.1"/>
</dbReference>
<dbReference type="SMR" id="A2SZW8"/>
<dbReference type="FunCoup" id="A2SZW8">
    <property type="interactions" value="1471"/>
</dbReference>
<dbReference type="STRING" id="4577.A2SZW8"/>
<dbReference type="Allergome" id="9885">
    <property type="allergen name" value="Zea m 32"/>
</dbReference>
<dbReference type="PeroxiBase" id="4964">
    <property type="entry name" value="Zm1CysPrx"/>
</dbReference>
<dbReference type="PaxDb" id="4577-GRMZM2G129761_P01"/>
<dbReference type="GeneID" id="100037830"/>
<dbReference type="KEGG" id="zma:100037830"/>
<dbReference type="eggNOG" id="KOG0854">
    <property type="taxonomic scope" value="Eukaryota"/>
</dbReference>
<dbReference type="InParanoid" id="A2SZW8"/>
<dbReference type="OrthoDB" id="2996783at2759"/>
<dbReference type="Proteomes" id="UP000007305">
    <property type="component" value="Unplaced"/>
</dbReference>
<dbReference type="ExpressionAtlas" id="A2SZW8">
    <property type="expression patterns" value="baseline and differential"/>
</dbReference>
<dbReference type="GO" id="GO:0005737">
    <property type="term" value="C:cytoplasm"/>
    <property type="evidence" value="ECO:0007669"/>
    <property type="project" value="UniProtKB-SubCell"/>
</dbReference>
<dbReference type="GO" id="GO:0005634">
    <property type="term" value="C:nucleus"/>
    <property type="evidence" value="ECO:0007669"/>
    <property type="project" value="UniProtKB-SubCell"/>
</dbReference>
<dbReference type="GO" id="GO:0004601">
    <property type="term" value="F:peroxidase activity"/>
    <property type="evidence" value="ECO:0000315"/>
    <property type="project" value="AgBase"/>
</dbReference>
<dbReference type="GO" id="GO:0140824">
    <property type="term" value="F:thioredoxin-dependent peroxiredoxin activity"/>
    <property type="evidence" value="ECO:0007669"/>
    <property type="project" value="UniProtKB-EC"/>
</dbReference>
<dbReference type="GO" id="GO:0050832">
    <property type="term" value="P:defense response to fungus"/>
    <property type="evidence" value="ECO:0000270"/>
    <property type="project" value="AgBase"/>
</dbReference>
<dbReference type="CDD" id="cd03016">
    <property type="entry name" value="PRX_1cys"/>
    <property type="match status" value="1"/>
</dbReference>
<dbReference type="FunFam" id="3.30.1020.10:FF:000001">
    <property type="entry name" value="1-Cys peroxiredoxin"/>
    <property type="match status" value="1"/>
</dbReference>
<dbReference type="FunFam" id="3.40.30.10:FF:000011">
    <property type="entry name" value="Peroxiredoxin PRX1"/>
    <property type="match status" value="1"/>
</dbReference>
<dbReference type="Gene3D" id="3.30.1020.10">
    <property type="entry name" value="Antioxidant, Horf6, Chain A, domain2"/>
    <property type="match status" value="1"/>
</dbReference>
<dbReference type="Gene3D" id="3.40.30.10">
    <property type="entry name" value="Glutaredoxin"/>
    <property type="match status" value="1"/>
</dbReference>
<dbReference type="InterPro" id="IPR000866">
    <property type="entry name" value="AhpC/TSA"/>
</dbReference>
<dbReference type="InterPro" id="IPR024706">
    <property type="entry name" value="Peroxiredoxin_AhpC-typ"/>
</dbReference>
<dbReference type="InterPro" id="IPR019479">
    <property type="entry name" value="Peroxiredoxin_C"/>
</dbReference>
<dbReference type="InterPro" id="IPR045020">
    <property type="entry name" value="PRX_1cys"/>
</dbReference>
<dbReference type="InterPro" id="IPR036249">
    <property type="entry name" value="Thioredoxin-like_sf"/>
</dbReference>
<dbReference type="InterPro" id="IPR013766">
    <property type="entry name" value="Thioredoxin_domain"/>
</dbReference>
<dbReference type="PANTHER" id="PTHR43503">
    <property type="entry name" value="MCG48959-RELATED"/>
    <property type="match status" value="1"/>
</dbReference>
<dbReference type="PANTHER" id="PTHR43503:SF4">
    <property type="entry name" value="PEROXIREDOXIN-6"/>
    <property type="match status" value="1"/>
</dbReference>
<dbReference type="Pfam" id="PF10417">
    <property type="entry name" value="1-cysPrx_C"/>
    <property type="match status" value="1"/>
</dbReference>
<dbReference type="Pfam" id="PF00578">
    <property type="entry name" value="AhpC-TSA"/>
    <property type="match status" value="1"/>
</dbReference>
<dbReference type="PIRSF" id="PIRSF000239">
    <property type="entry name" value="AHPC"/>
    <property type="match status" value="1"/>
</dbReference>
<dbReference type="SUPFAM" id="SSF52833">
    <property type="entry name" value="Thioredoxin-like"/>
    <property type="match status" value="1"/>
</dbReference>
<dbReference type="PROSITE" id="PS51352">
    <property type="entry name" value="THIOREDOXIN_2"/>
    <property type="match status" value="1"/>
</dbReference>
<accession>A2SZW8</accession>
<gene>
    <name type="primary">PER1</name>
    <name type="synonym">PER-1</name>
</gene>
<protein>
    <recommendedName>
        <fullName>1-Cys peroxiredoxin PER1</fullName>
        <ecNumber evidence="3">1.11.1.24</ecNumber>
    </recommendedName>
    <alternativeName>
        <fullName>Rehydrin homolog</fullName>
    </alternativeName>
    <alternativeName>
        <fullName>Thioredoxin peroxidase</fullName>
    </alternativeName>
    <alternativeName>
        <fullName evidence="6">Thioredoxin-dependent peroxiredoxin</fullName>
    </alternativeName>
</protein>
<name>REHY_MAIZE</name>